<keyword id="KW-0274">FAD</keyword>
<keyword id="KW-0285">Flavoprotein</keyword>
<keyword id="KW-0325">Glycoprotein</keyword>
<keyword id="KW-0472">Membrane</keyword>
<keyword id="KW-0503">Monooxygenase</keyword>
<keyword id="KW-0560">Oxidoreductase</keyword>
<keyword id="KW-0732">Signal</keyword>
<keyword id="KW-0812">Transmembrane</keyword>
<keyword id="KW-1133">Transmembrane helix</keyword>
<accession>A0A8D5M3V0</accession>
<evidence type="ECO:0000250" key="1">
    <source>
        <dbReference type="UniProtKB" id="B8M9J8"/>
    </source>
</evidence>
<evidence type="ECO:0000255" key="2"/>
<evidence type="ECO:0000255" key="3">
    <source>
        <dbReference type="PROSITE-ProRule" id="PRU00498"/>
    </source>
</evidence>
<evidence type="ECO:0000269" key="4">
    <source>
    </source>
</evidence>
<evidence type="ECO:0000303" key="5">
    <source>
    </source>
</evidence>
<evidence type="ECO:0000305" key="6"/>
<reference key="1">
    <citation type="journal article" date="2022" name="J. Nat. Prod.">
        <title>Synthetic biology-based discovery of diterpenoid pyrones from the genome of Eupenicillium shearii.</title>
        <authorList>
            <person name="Morishita Y."/>
            <person name="Tsukada K."/>
            <person name="Murakami K."/>
            <person name="Irie K."/>
            <person name="Asai T."/>
        </authorList>
    </citation>
    <scope>NUCLEOTIDE SEQUENCE [GENOMIC DNA]</scope>
    <scope>FUNCTION</scope>
    <scope>CATALYTIC ACTIVITY</scope>
    <scope>PATHWAY</scope>
    <scope>BIOTECHNOLOGY</scope>
    <source>
        <strain>IFM 42152</strain>
    </source>
</reference>
<sequence>MGAERLKVIIVGGSIAGLTLAHCLDKAGIDYVVLEKRKEITHQEGASILILPHGGRILDQLGMFHSLSQYTEPLHAAHISYPDGFTHTNRSPQVLTDRFGIPLILVERRNLLKVLYNSLPDQSLVQLGKKVVSLNHHNGQVTVTVDDGNVYEGDLVVGADGVHSRVRDEVWRLSDAIRSGTVKDKEKKSMSIEYACIFGISNGVSGLVAGEQVASLNKGRSFLTFPGRDGRVFWFLMHKLDKNYTYPGAPRWSPEDAERIAARYIDDHIWNGVQFKDIWDKREVCGITNLEENIFQTWHSGRVLCLGDSMHKMAPNTGQGANCAMEDAALLANYLRHYLDGQKTAAKPSQEDLNTLFEKFSRDRINRLQSIYKMSRIVVRLHAGRNLFLRLMGRYYLPNTGDVPANQASKSIASGIYLDYLPLPTYSAPGWQDFAPNSKLFSGSLLLIMSVALLFGVICWAGRDIHPLSMKILALLGNYVSQ</sequence>
<protein>
    <recommendedName>
        <fullName evidence="5">FAD-dependent monooxygenase esdpE</fullName>
        <ecNumber evidence="4">1.-.-.-</ecNumber>
    </recommendedName>
    <alternativeName>
        <fullName evidence="5">Shearone I biosynthesis cluster protein E</fullName>
    </alternativeName>
</protein>
<dbReference type="EC" id="1.-.-.-" evidence="4"/>
<dbReference type="EMBL" id="LC600199">
    <property type="protein sequence ID" value="BCP96881.1"/>
    <property type="molecule type" value="Genomic_DNA"/>
</dbReference>
<dbReference type="SMR" id="A0A8D5M3V0"/>
<dbReference type="UniPathway" id="UPA00213"/>
<dbReference type="GO" id="GO:0016020">
    <property type="term" value="C:membrane"/>
    <property type="evidence" value="ECO:0007669"/>
    <property type="project" value="UniProtKB-SubCell"/>
</dbReference>
<dbReference type="GO" id="GO:0071949">
    <property type="term" value="F:FAD binding"/>
    <property type="evidence" value="ECO:0007669"/>
    <property type="project" value="InterPro"/>
</dbReference>
<dbReference type="GO" id="GO:0004497">
    <property type="term" value="F:monooxygenase activity"/>
    <property type="evidence" value="ECO:0007669"/>
    <property type="project" value="UniProtKB-KW"/>
</dbReference>
<dbReference type="Gene3D" id="3.50.50.60">
    <property type="entry name" value="FAD/NAD(P)-binding domain"/>
    <property type="match status" value="1"/>
</dbReference>
<dbReference type="InterPro" id="IPR002938">
    <property type="entry name" value="FAD-bd"/>
</dbReference>
<dbReference type="InterPro" id="IPR036188">
    <property type="entry name" value="FAD/NAD-bd_sf"/>
</dbReference>
<dbReference type="InterPro" id="IPR050562">
    <property type="entry name" value="FAD_mOase_fung"/>
</dbReference>
<dbReference type="PANTHER" id="PTHR47356:SF2">
    <property type="entry name" value="FAD-BINDING DOMAIN-CONTAINING PROTEIN-RELATED"/>
    <property type="match status" value="1"/>
</dbReference>
<dbReference type="PANTHER" id="PTHR47356">
    <property type="entry name" value="FAD-DEPENDENT MONOOXYGENASE ASQG-RELATED"/>
    <property type="match status" value="1"/>
</dbReference>
<dbReference type="Pfam" id="PF01494">
    <property type="entry name" value="FAD_binding_3"/>
    <property type="match status" value="1"/>
</dbReference>
<dbReference type="PRINTS" id="PR00420">
    <property type="entry name" value="RNGMNOXGNASE"/>
</dbReference>
<dbReference type="SUPFAM" id="SSF51905">
    <property type="entry name" value="FAD/NAD(P)-binding domain"/>
    <property type="match status" value="1"/>
</dbReference>
<gene>
    <name evidence="5" type="primary">esdpE</name>
</gene>
<name>ESDPE_PENSH</name>
<proteinExistence type="evidence at protein level"/>
<organism>
    <name type="scientific">Penicillium shearii</name>
    <name type="common">Eupenicillium shearii</name>
    <dbReference type="NCBI Taxonomy" id="904690"/>
    <lineage>
        <taxon>Eukaryota</taxon>
        <taxon>Fungi</taxon>
        <taxon>Dikarya</taxon>
        <taxon>Ascomycota</taxon>
        <taxon>Pezizomycotina</taxon>
        <taxon>Eurotiomycetes</taxon>
        <taxon>Eurotiomycetidae</taxon>
        <taxon>Eurotiales</taxon>
        <taxon>Aspergillaceae</taxon>
        <taxon>Penicillium</taxon>
    </lineage>
</organism>
<comment type="function">
    <text evidence="4">FAD-dependent monooxygenase; part of the cluster that mediates the biosynthesis of shearones, diterpenoid pyrones (DPs) which are structurally diverse meroterpenoids consisting of a diterpene linked by a pyrone, and which may exhibit a range of bioactivities (PubMed:35057611). Within the pathway, esdpE takes part to the biosynthesis of the molecular scaffold by catalyzing the formation of an (S)-epoxide ring at the terminal olefin of the geranylgeranyl group (PubMed:35057611). The molecular scaffold is commonly biosynthesized by a series of enzymes including the non-reducing polyketide synthase (NR-PKS) esdpA that generates an alpha-pyrone; the prenyltransferase esdpC that attaches a geranylgeranyl pyrophosphate (GGPP) produced by the GGPP synthase (GGPPS) esdpD onto the pyrone unit; the FAD-dependent monooxygenase esdpE that converts an olefin on the diterpene unit into an epoxide; and the terpene cyclase esdpB that catalyzes the cyclization reactions to give the molecular backbone shearone A (PubMed:35057611). In the modification steps, esdpF oxidizes the hydroxy group to a ketone at C-3 and esdpG then attaches hydroxy groups at both C-11 and C-12. After that, esdpI hydroxylates at C-20 and esdpH hydroxylates at C-6'. The ether bridge is generated by nucleophilic attack of the hydroxy group at C-20 to the carbonyl carbon at C-3. EsdpH can also functions prior to esdpI. The different combinations of these modification enzymes lead to the production of diverse shearone derivatives, shearone I being the end product of the pathway (PubMed:35057611). The alpha-ketoglutarate-dependent dioxygenase esdpJ seems not to be involved in this pathway (PubMed:35057611).</text>
</comment>
<comment type="cofactor">
    <cofactor evidence="6">
        <name>FAD</name>
        <dbReference type="ChEBI" id="CHEBI:57692"/>
    </cofactor>
</comment>
<comment type="pathway">
    <text evidence="4">Secondary metabolite biosynthesis; terpenoid biosynthesis.</text>
</comment>
<comment type="subcellular location">
    <subcellularLocation>
        <location evidence="2">Membrane</location>
        <topology evidence="2">Single-pass membrane protein</topology>
    </subcellularLocation>
</comment>
<comment type="biotechnology">
    <text evidence="4">Shearone derivatives produced by this cluster are interesting candidates for Alzheimer's disease (AD) therapy since they moderately inhibit aggregation of amyloid beta 42 (Abeta42).</text>
</comment>
<comment type="similarity">
    <text evidence="6">Belongs to the paxM FAD-dependent monooxygenase family.</text>
</comment>
<feature type="signal peptide" evidence="2">
    <location>
        <begin position="1"/>
        <end position="21"/>
    </location>
</feature>
<feature type="chain" id="PRO_5034017251" description="FAD-dependent monooxygenase esdpE">
    <location>
        <begin position="22"/>
        <end position="482"/>
    </location>
</feature>
<feature type="transmembrane region" description="Helical" evidence="2">
    <location>
        <begin position="440"/>
        <end position="460"/>
    </location>
</feature>
<feature type="binding site" evidence="1">
    <location>
        <position position="35"/>
    </location>
    <ligand>
        <name>FAD</name>
        <dbReference type="ChEBI" id="CHEBI:57692"/>
    </ligand>
</feature>
<feature type="binding site" evidence="1">
    <location>
        <position position="108"/>
    </location>
    <ligand>
        <name>FAD</name>
        <dbReference type="ChEBI" id="CHEBI:57692"/>
    </ligand>
</feature>
<feature type="binding site" evidence="1">
    <location>
        <position position="308"/>
    </location>
    <ligand>
        <name>FAD</name>
        <dbReference type="ChEBI" id="CHEBI:57692"/>
    </ligand>
</feature>
<feature type="binding site" evidence="1">
    <location>
        <position position="321"/>
    </location>
    <ligand>
        <name>FAD</name>
        <dbReference type="ChEBI" id="CHEBI:57692"/>
    </ligand>
</feature>
<feature type="glycosylation site" description="N-linked (GlcNAc...) asparagine" evidence="3">
    <location>
        <position position="243"/>
    </location>
</feature>